<feature type="signal peptide" evidence="2">
    <location>
        <begin position="1"/>
        <end position="22"/>
    </location>
</feature>
<feature type="chain" id="PRO_0000408625" description="Long chronological lifespan protein 2">
    <location>
        <begin position="23"/>
        <end position="129"/>
    </location>
</feature>
<protein>
    <recommendedName>
        <fullName>Long chronological lifespan protein 2</fullName>
    </recommendedName>
</protein>
<keyword id="KW-1185">Reference proteome</keyword>
<keyword id="KW-0732">Signal</keyword>
<sequence>MTNPTILLTTVLLTLLTTPALAQFGFFDQMFGGGGGQQQGHHHHHEQEAQNVRSDASWYQSQYEGAQCTHYLCPGTLSCVHFPHHCPCSWETVEDKVELGEGIAVCGSKGGWVEGEFGKKVEMARKGLL</sequence>
<organism>
    <name type="scientific">Pyrenophora tritici-repentis (strain Pt-1C-BFP)</name>
    <name type="common">Wheat tan spot fungus</name>
    <name type="synonym">Drechslera tritici-repentis</name>
    <dbReference type="NCBI Taxonomy" id="426418"/>
    <lineage>
        <taxon>Eukaryota</taxon>
        <taxon>Fungi</taxon>
        <taxon>Dikarya</taxon>
        <taxon>Ascomycota</taxon>
        <taxon>Pezizomycotina</taxon>
        <taxon>Dothideomycetes</taxon>
        <taxon>Pleosporomycetidae</taxon>
        <taxon>Pleosporales</taxon>
        <taxon>Pleosporineae</taxon>
        <taxon>Pleosporaceae</taxon>
        <taxon>Pyrenophora</taxon>
    </lineage>
</organism>
<dbReference type="EMBL" id="DS231625">
    <property type="protein sequence ID" value="EDU42515.1"/>
    <property type="molecule type" value="Genomic_DNA"/>
</dbReference>
<dbReference type="RefSeq" id="XP_001939796.1">
    <property type="nucleotide sequence ID" value="XM_001939761.1"/>
</dbReference>
<dbReference type="SMR" id="B2WHK5"/>
<dbReference type="STRING" id="426418.B2WHK5"/>
<dbReference type="EnsemblFungi" id="EDU42515">
    <property type="protein sequence ID" value="EDU42515"/>
    <property type="gene ID" value="PTRG_09464"/>
</dbReference>
<dbReference type="GeneID" id="6347754"/>
<dbReference type="KEGG" id="ptrr:6347754"/>
<dbReference type="eggNOG" id="ENOG502S416">
    <property type="taxonomic scope" value="Eukaryota"/>
</dbReference>
<dbReference type="HOGENOM" id="CLU_142363_0_0_1"/>
<dbReference type="InParanoid" id="B2WHK5"/>
<dbReference type="OMA" id="DNYLCPD"/>
<dbReference type="OrthoDB" id="15909at28556"/>
<dbReference type="Proteomes" id="UP000001471">
    <property type="component" value="Unassembled WGS sequence"/>
</dbReference>
<dbReference type="GO" id="GO:0036503">
    <property type="term" value="P:ERAD pathway"/>
    <property type="evidence" value="ECO:0007669"/>
    <property type="project" value="TreeGrafter"/>
</dbReference>
<dbReference type="CDD" id="cd23996">
    <property type="entry name" value="LCL2-like"/>
    <property type="match status" value="1"/>
</dbReference>
<dbReference type="InterPro" id="IPR034543">
    <property type="entry name" value="LCL2"/>
</dbReference>
<dbReference type="PANTHER" id="PTHR38425">
    <property type="entry name" value="LONG CHRONOLOGICAL LIFESPAN PROTEIN 2"/>
    <property type="match status" value="1"/>
</dbReference>
<dbReference type="PANTHER" id="PTHR38425:SF1">
    <property type="entry name" value="LONG CHRONOLOGICAL LIFESPAN PROTEIN 2"/>
    <property type="match status" value="1"/>
</dbReference>
<evidence type="ECO:0000250" key="1"/>
<evidence type="ECO:0000255" key="2"/>
<evidence type="ECO:0000305" key="3"/>
<gene>
    <name type="primary">lcl2</name>
    <name type="ORF">PTRG_09464</name>
</gene>
<reference key="1">
    <citation type="journal article" date="2013" name="G3 (Bethesda)">
        <title>Comparative genomics of a plant-pathogenic fungus, Pyrenophora tritici-repentis, reveals transduplication and the impact of repeat elements on pathogenicity and population divergence.</title>
        <authorList>
            <person name="Manning V.A."/>
            <person name="Pandelova I."/>
            <person name="Dhillon B."/>
            <person name="Wilhelm L.J."/>
            <person name="Goodwin S.B."/>
            <person name="Berlin A.M."/>
            <person name="Figueroa M."/>
            <person name="Freitag M."/>
            <person name="Hane J.K."/>
            <person name="Henrissat B."/>
            <person name="Holman W.H."/>
            <person name="Kodira C.D."/>
            <person name="Martin J."/>
            <person name="Oliver R.P."/>
            <person name="Robbertse B."/>
            <person name="Schackwitz W."/>
            <person name="Schwartz D.C."/>
            <person name="Spatafora J.W."/>
            <person name="Turgeon B.G."/>
            <person name="Yandava C."/>
            <person name="Young S."/>
            <person name="Zhou S."/>
            <person name="Zeng Q."/>
            <person name="Grigoriev I.V."/>
            <person name="Ma L.-J."/>
            <person name="Ciuffetti L.M."/>
        </authorList>
    </citation>
    <scope>NUCLEOTIDE SEQUENCE [LARGE SCALE GENOMIC DNA]</scope>
    <source>
        <strain>Pt-1C-BFP</strain>
    </source>
</reference>
<proteinExistence type="inferred from homology"/>
<comment type="function">
    <text evidence="1">Probable component of the endoplasmic reticulum-associated degradation (ERAD) pathway.</text>
</comment>
<comment type="similarity">
    <text evidence="3">Belongs to the LCL2 family.</text>
</comment>
<name>LCL2_PYRTR</name>
<accession>B2WHK5</accession>